<keyword id="KW-0004">4Fe-4S</keyword>
<keyword id="KW-0997">Cell inner membrane</keyword>
<keyword id="KW-1003">Cell membrane</keyword>
<keyword id="KW-0408">Iron</keyword>
<keyword id="KW-0411">Iron-sulfur</keyword>
<keyword id="KW-0472">Membrane</keyword>
<keyword id="KW-0479">Metal-binding</keyword>
<keyword id="KW-0520">NAD</keyword>
<keyword id="KW-0874">Quinone</keyword>
<keyword id="KW-1185">Reference proteome</keyword>
<keyword id="KW-0677">Repeat</keyword>
<keyword id="KW-1278">Translocase</keyword>
<keyword id="KW-0830">Ubiquinone</keyword>
<feature type="chain" id="PRO_0000250929" description="NADH-quinone oxidoreductase subunit I 2">
    <location>
        <begin position="1"/>
        <end position="188"/>
    </location>
</feature>
<feature type="domain" description="4Fe-4S ferredoxin-type 1" evidence="1">
    <location>
        <begin position="56"/>
        <end position="88"/>
    </location>
</feature>
<feature type="domain" description="4Fe-4S ferredoxin-type 2" evidence="1">
    <location>
        <begin position="98"/>
        <end position="127"/>
    </location>
</feature>
<feature type="binding site" evidence="1">
    <location>
        <position position="68"/>
    </location>
    <ligand>
        <name>[4Fe-4S] cluster</name>
        <dbReference type="ChEBI" id="CHEBI:49883"/>
        <label>1</label>
    </ligand>
</feature>
<feature type="binding site" evidence="1">
    <location>
        <position position="71"/>
    </location>
    <ligand>
        <name>[4Fe-4S] cluster</name>
        <dbReference type="ChEBI" id="CHEBI:49883"/>
        <label>1</label>
    </ligand>
</feature>
<feature type="binding site" evidence="1">
    <location>
        <position position="74"/>
    </location>
    <ligand>
        <name>[4Fe-4S] cluster</name>
        <dbReference type="ChEBI" id="CHEBI:49883"/>
        <label>1</label>
    </ligand>
</feature>
<feature type="binding site" evidence="1">
    <location>
        <position position="78"/>
    </location>
    <ligand>
        <name>[4Fe-4S] cluster</name>
        <dbReference type="ChEBI" id="CHEBI:49883"/>
        <label>2</label>
    </ligand>
</feature>
<feature type="binding site" evidence="1">
    <location>
        <position position="107"/>
    </location>
    <ligand>
        <name>[4Fe-4S] cluster</name>
        <dbReference type="ChEBI" id="CHEBI:49883"/>
        <label>2</label>
    </ligand>
</feature>
<feature type="binding site" evidence="1">
    <location>
        <position position="110"/>
    </location>
    <ligand>
        <name>[4Fe-4S] cluster</name>
        <dbReference type="ChEBI" id="CHEBI:49883"/>
        <label>2</label>
    </ligand>
</feature>
<feature type="binding site" evidence="1">
    <location>
        <position position="113"/>
    </location>
    <ligand>
        <name>[4Fe-4S] cluster</name>
        <dbReference type="ChEBI" id="CHEBI:49883"/>
        <label>2</label>
    </ligand>
</feature>
<feature type="binding site" evidence="1">
    <location>
        <position position="117"/>
    </location>
    <ligand>
        <name>[4Fe-4S] cluster</name>
        <dbReference type="ChEBI" id="CHEBI:49883"/>
        <label>1</label>
    </ligand>
</feature>
<comment type="function">
    <text evidence="1">NDH-1 shuttles electrons from NADH, via FMN and iron-sulfur (Fe-S) centers, to quinones in the respiratory chain. The immediate electron acceptor for the enzyme in this species is believed to be ubiquinone. Couples the redox reaction to proton translocation (for every two electrons transferred, four hydrogen ions are translocated across the cytoplasmic membrane), and thus conserves the redox energy in a proton gradient.</text>
</comment>
<comment type="catalytic activity">
    <reaction evidence="1">
        <text>a quinone + NADH + 5 H(+)(in) = a quinol + NAD(+) + 4 H(+)(out)</text>
        <dbReference type="Rhea" id="RHEA:57888"/>
        <dbReference type="ChEBI" id="CHEBI:15378"/>
        <dbReference type="ChEBI" id="CHEBI:24646"/>
        <dbReference type="ChEBI" id="CHEBI:57540"/>
        <dbReference type="ChEBI" id="CHEBI:57945"/>
        <dbReference type="ChEBI" id="CHEBI:132124"/>
    </reaction>
</comment>
<comment type="cofactor">
    <cofactor evidence="1">
        <name>[4Fe-4S] cluster</name>
        <dbReference type="ChEBI" id="CHEBI:49883"/>
    </cofactor>
    <text evidence="1">Binds 2 [4Fe-4S] clusters per subunit.</text>
</comment>
<comment type="subunit">
    <text evidence="1">NDH-1 is composed of 14 different subunits. Subunits NuoA, H, J, K, L, M, N constitute the membrane sector of the complex.</text>
</comment>
<comment type="subcellular location">
    <subcellularLocation>
        <location evidence="1">Cell inner membrane</location>
        <topology evidence="1">Peripheral membrane protein</topology>
    </subcellularLocation>
</comment>
<comment type="similarity">
    <text evidence="1">Belongs to the complex I 23 kDa subunit family.</text>
</comment>
<evidence type="ECO:0000255" key="1">
    <source>
        <dbReference type="HAMAP-Rule" id="MF_01351"/>
    </source>
</evidence>
<name>NUOI2_RHIEC</name>
<dbReference type="EC" id="7.1.1.-" evidence="1"/>
<dbReference type="EMBL" id="CP000133">
    <property type="protein sequence ID" value="ABC92499.1"/>
    <property type="molecule type" value="Genomic_DNA"/>
</dbReference>
<dbReference type="RefSeq" id="WP_011426951.1">
    <property type="nucleotide sequence ID" value="NC_007761.1"/>
</dbReference>
<dbReference type="SMR" id="Q2K3T7"/>
<dbReference type="KEGG" id="ret:RHE_CH03744"/>
<dbReference type="eggNOG" id="COG1143">
    <property type="taxonomic scope" value="Bacteria"/>
</dbReference>
<dbReference type="HOGENOM" id="CLU_067218_4_3_5"/>
<dbReference type="OrthoDB" id="9808559at2"/>
<dbReference type="Proteomes" id="UP000001936">
    <property type="component" value="Chromosome"/>
</dbReference>
<dbReference type="GO" id="GO:0005886">
    <property type="term" value="C:plasma membrane"/>
    <property type="evidence" value="ECO:0007669"/>
    <property type="project" value="UniProtKB-SubCell"/>
</dbReference>
<dbReference type="GO" id="GO:0051539">
    <property type="term" value="F:4 iron, 4 sulfur cluster binding"/>
    <property type="evidence" value="ECO:0007669"/>
    <property type="project" value="UniProtKB-KW"/>
</dbReference>
<dbReference type="GO" id="GO:0005506">
    <property type="term" value="F:iron ion binding"/>
    <property type="evidence" value="ECO:0007669"/>
    <property type="project" value="UniProtKB-UniRule"/>
</dbReference>
<dbReference type="GO" id="GO:0050136">
    <property type="term" value="F:NADH:ubiquinone reductase (non-electrogenic) activity"/>
    <property type="evidence" value="ECO:0007669"/>
    <property type="project" value="UniProtKB-UniRule"/>
</dbReference>
<dbReference type="GO" id="GO:0048038">
    <property type="term" value="F:quinone binding"/>
    <property type="evidence" value="ECO:0007669"/>
    <property type="project" value="UniProtKB-KW"/>
</dbReference>
<dbReference type="Gene3D" id="3.30.70.3270">
    <property type="match status" value="1"/>
</dbReference>
<dbReference type="HAMAP" id="MF_01351">
    <property type="entry name" value="NDH1_NuoI"/>
    <property type="match status" value="1"/>
</dbReference>
<dbReference type="InterPro" id="IPR017896">
    <property type="entry name" value="4Fe4S_Fe-S-bd"/>
</dbReference>
<dbReference type="InterPro" id="IPR017900">
    <property type="entry name" value="4Fe4S_Fe_S_CS"/>
</dbReference>
<dbReference type="InterPro" id="IPR010226">
    <property type="entry name" value="NADH_quinone_OxRdtase_chainI"/>
</dbReference>
<dbReference type="NCBIfam" id="TIGR01971">
    <property type="entry name" value="NuoI"/>
    <property type="match status" value="1"/>
</dbReference>
<dbReference type="PANTHER" id="PTHR10849">
    <property type="entry name" value="NADH DEHYDROGENASE UBIQUINONE IRON-SULFUR PROTEIN 8, MITOCHONDRIAL"/>
    <property type="match status" value="1"/>
</dbReference>
<dbReference type="PANTHER" id="PTHR10849:SF24">
    <property type="entry name" value="NADH-QUINONE OXIDOREDUCTASE SUBUNIT I 2"/>
    <property type="match status" value="1"/>
</dbReference>
<dbReference type="Pfam" id="PF12838">
    <property type="entry name" value="Fer4_7"/>
    <property type="match status" value="1"/>
</dbReference>
<dbReference type="SUPFAM" id="SSF54862">
    <property type="entry name" value="4Fe-4S ferredoxins"/>
    <property type="match status" value="1"/>
</dbReference>
<dbReference type="PROSITE" id="PS00198">
    <property type="entry name" value="4FE4S_FER_1"/>
    <property type="match status" value="2"/>
</dbReference>
<dbReference type="PROSITE" id="PS51379">
    <property type="entry name" value="4FE4S_FER_2"/>
    <property type="match status" value="2"/>
</dbReference>
<sequence length="188" mass="21256">MSRAQDRIGTWIGWTFFADLANALTLTFGYMFSSPVTMQYPDTEKWLPYSRYRGHHFLKRDEEGEIKCVACELCARICPCDCIEVVPYEDEKGNRHPAKFEIDTARCLFCGLCEDACPADAIALGQQYEFSSFSSADLVIGRDDLLAKPGKAATGGGVVSARLNTKKDVLVETKEMQGYNWWRNIRRT</sequence>
<gene>
    <name evidence="1" type="primary">nuoI2</name>
    <name type="ordered locus">RHE_CH03744</name>
</gene>
<proteinExistence type="inferred from homology"/>
<organism>
    <name type="scientific">Rhizobium etli (strain ATCC 51251 / DSM 11541 / JCM 21823 / NBRC 15573 / CFN 42)</name>
    <dbReference type="NCBI Taxonomy" id="347834"/>
    <lineage>
        <taxon>Bacteria</taxon>
        <taxon>Pseudomonadati</taxon>
        <taxon>Pseudomonadota</taxon>
        <taxon>Alphaproteobacteria</taxon>
        <taxon>Hyphomicrobiales</taxon>
        <taxon>Rhizobiaceae</taxon>
        <taxon>Rhizobium/Agrobacterium group</taxon>
        <taxon>Rhizobium</taxon>
    </lineage>
</organism>
<accession>Q2K3T7</accession>
<protein>
    <recommendedName>
        <fullName evidence="1">NADH-quinone oxidoreductase subunit I 2</fullName>
        <ecNumber evidence="1">7.1.1.-</ecNumber>
    </recommendedName>
    <alternativeName>
        <fullName evidence="1">NADH dehydrogenase I subunit I 2</fullName>
    </alternativeName>
    <alternativeName>
        <fullName evidence="1">NDH-1 subunit I 2</fullName>
    </alternativeName>
</protein>
<reference key="1">
    <citation type="journal article" date="2006" name="Proc. Natl. Acad. Sci. U.S.A.">
        <title>The partitioned Rhizobium etli genome: genetic and metabolic redundancy in seven interacting replicons.</title>
        <authorList>
            <person name="Gonzalez V."/>
            <person name="Santamaria R.I."/>
            <person name="Bustos P."/>
            <person name="Hernandez-Gonzalez I."/>
            <person name="Medrano-Soto A."/>
            <person name="Moreno-Hagelsieb G."/>
            <person name="Janga S.C."/>
            <person name="Ramirez M.A."/>
            <person name="Jimenez-Jacinto V."/>
            <person name="Collado-Vides J."/>
            <person name="Davila G."/>
        </authorList>
    </citation>
    <scope>NUCLEOTIDE SEQUENCE [LARGE SCALE GENOMIC DNA]</scope>
    <source>
        <strain>ATCC 51251 / DSM 11541 / JCM 21823 / NBRC 15573 / CFN 42</strain>
    </source>
</reference>